<protein>
    <recommendedName>
        <fullName evidence="1">ATP synthase gamma chain</fullName>
    </recommendedName>
    <alternativeName>
        <fullName evidence="1">ATP synthase F1 sector gamma subunit</fullName>
    </alternativeName>
    <alternativeName>
        <fullName evidence="1">F-ATPase gamma subunit</fullName>
    </alternativeName>
</protein>
<sequence length="287" mass="31577">MAGAKEIRSKIASVQNTQKITKAMEMVAASKMRKSQDRMAASRPYAETMRKVIGHLAHGNLEYKHPYLEDRDVKRVGYLVVSTDRGLCGGLNINLFKKLLAEMKTWTDKGVQCDLAMIGSKGVSFFNSVGGNVVAQVTGMGDNPSLSELIGPVKVMLQAYDEGRLDKLYIVSNKFINTMSQVPTISQLLPLPASDDDDLKHKSWDYLYEPDPKALLDTLLRRYVESQVYQGVVENLASEQAARMVAMKAATDNGGSLIKELQLVYNKARQASITQELTEIVSGAAAV</sequence>
<comment type="function">
    <text evidence="1">Produces ATP from ADP in the presence of a proton gradient across the membrane. The gamma chain is believed to be important in regulating ATPase activity and the flow of protons through the CF(0) complex.</text>
</comment>
<comment type="subunit">
    <text evidence="1">F-type ATPases have 2 components, CF(1) - the catalytic core - and CF(0) - the membrane proton channel. CF(1) has five subunits: alpha(3), beta(3), gamma(1), delta(1), epsilon(1). CF(0) has three main subunits: a, b and c.</text>
</comment>
<comment type="subcellular location">
    <subcellularLocation>
        <location evidence="1">Cell inner membrane</location>
        <topology evidence="1">Peripheral membrane protein</topology>
    </subcellularLocation>
</comment>
<comment type="similarity">
    <text evidence="1">Belongs to the ATPase gamma chain family.</text>
</comment>
<gene>
    <name evidence="1" type="primary">atpG</name>
    <name type="ordered locus">ECS88_4155</name>
</gene>
<accession>B7MGF3</accession>
<reference key="1">
    <citation type="journal article" date="2009" name="PLoS Genet.">
        <title>Organised genome dynamics in the Escherichia coli species results in highly diverse adaptive paths.</title>
        <authorList>
            <person name="Touchon M."/>
            <person name="Hoede C."/>
            <person name="Tenaillon O."/>
            <person name="Barbe V."/>
            <person name="Baeriswyl S."/>
            <person name="Bidet P."/>
            <person name="Bingen E."/>
            <person name="Bonacorsi S."/>
            <person name="Bouchier C."/>
            <person name="Bouvet O."/>
            <person name="Calteau A."/>
            <person name="Chiapello H."/>
            <person name="Clermont O."/>
            <person name="Cruveiller S."/>
            <person name="Danchin A."/>
            <person name="Diard M."/>
            <person name="Dossat C."/>
            <person name="Karoui M.E."/>
            <person name="Frapy E."/>
            <person name="Garry L."/>
            <person name="Ghigo J.M."/>
            <person name="Gilles A.M."/>
            <person name="Johnson J."/>
            <person name="Le Bouguenec C."/>
            <person name="Lescat M."/>
            <person name="Mangenot S."/>
            <person name="Martinez-Jehanne V."/>
            <person name="Matic I."/>
            <person name="Nassif X."/>
            <person name="Oztas S."/>
            <person name="Petit M.A."/>
            <person name="Pichon C."/>
            <person name="Rouy Z."/>
            <person name="Ruf C.S."/>
            <person name="Schneider D."/>
            <person name="Tourret J."/>
            <person name="Vacherie B."/>
            <person name="Vallenet D."/>
            <person name="Medigue C."/>
            <person name="Rocha E.P.C."/>
            <person name="Denamur E."/>
        </authorList>
    </citation>
    <scope>NUCLEOTIDE SEQUENCE [LARGE SCALE GENOMIC DNA]</scope>
    <source>
        <strain>S88 / ExPEC</strain>
    </source>
</reference>
<keyword id="KW-0066">ATP synthesis</keyword>
<keyword id="KW-0997">Cell inner membrane</keyword>
<keyword id="KW-1003">Cell membrane</keyword>
<keyword id="KW-0139">CF(1)</keyword>
<keyword id="KW-0375">Hydrogen ion transport</keyword>
<keyword id="KW-0406">Ion transport</keyword>
<keyword id="KW-0472">Membrane</keyword>
<keyword id="KW-1185">Reference proteome</keyword>
<keyword id="KW-0813">Transport</keyword>
<name>ATPG_ECO45</name>
<dbReference type="EMBL" id="CU928161">
    <property type="protein sequence ID" value="CAR05361.1"/>
    <property type="molecule type" value="Genomic_DNA"/>
</dbReference>
<dbReference type="RefSeq" id="WP_000896498.1">
    <property type="nucleotide sequence ID" value="NC_011742.1"/>
</dbReference>
<dbReference type="EMDB" id="EMD-8357"/>
<dbReference type="EMDB" id="EMD-8358"/>
<dbReference type="EMDB" id="EMD-8359"/>
<dbReference type="SMR" id="B7MGF3"/>
<dbReference type="GeneID" id="93778234"/>
<dbReference type="KEGG" id="ecz:ECS88_4155"/>
<dbReference type="HOGENOM" id="CLU_050669_0_1_6"/>
<dbReference type="Proteomes" id="UP000000747">
    <property type="component" value="Chromosome"/>
</dbReference>
<dbReference type="GO" id="GO:0005886">
    <property type="term" value="C:plasma membrane"/>
    <property type="evidence" value="ECO:0007669"/>
    <property type="project" value="UniProtKB-SubCell"/>
</dbReference>
<dbReference type="GO" id="GO:0045259">
    <property type="term" value="C:proton-transporting ATP synthase complex"/>
    <property type="evidence" value="ECO:0007669"/>
    <property type="project" value="UniProtKB-KW"/>
</dbReference>
<dbReference type="GO" id="GO:0005524">
    <property type="term" value="F:ATP binding"/>
    <property type="evidence" value="ECO:0007669"/>
    <property type="project" value="UniProtKB-UniRule"/>
</dbReference>
<dbReference type="GO" id="GO:0046933">
    <property type="term" value="F:proton-transporting ATP synthase activity, rotational mechanism"/>
    <property type="evidence" value="ECO:0007669"/>
    <property type="project" value="UniProtKB-UniRule"/>
</dbReference>
<dbReference type="GO" id="GO:0042777">
    <property type="term" value="P:proton motive force-driven plasma membrane ATP synthesis"/>
    <property type="evidence" value="ECO:0007669"/>
    <property type="project" value="UniProtKB-UniRule"/>
</dbReference>
<dbReference type="CDD" id="cd12151">
    <property type="entry name" value="F1-ATPase_gamma"/>
    <property type="match status" value="1"/>
</dbReference>
<dbReference type="FunFam" id="1.10.287.80:FF:000005">
    <property type="entry name" value="ATP synthase gamma chain"/>
    <property type="match status" value="2"/>
</dbReference>
<dbReference type="FunFam" id="3.40.1380.10:FF:000001">
    <property type="entry name" value="ATP synthase gamma chain"/>
    <property type="match status" value="1"/>
</dbReference>
<dbReference type="Gene3D" id="3.40.1380.10">
    <property type="match status" value="1"/>
</dbReference>
<dbReference type="Gene3D" id="1.10.287.80">
    <property type="entry name" value="ATP synthase, gamma subunit, helix hairpin domain"/>
    <property type="match status" value="1"/>
</dbReference>
<dbReference type="HAMAP" id="MF_00815">
    <property type="entry name" value="ATP_synth_gamma_bact"/>
    <property type="match status" value="1"/>
</dbReference>
<dbReference type="InterPro" id="IPR035968">
    <property type="entry name" value="ATP_synth_F1_ATPase_gsu"/>
</dbReference>
<dbReference type="InterPro" id="IPR000131">
    <property type="entry name" value="ATP_synth_F1_gsu"/>
</dbReference>
<dbReference type="InterPro" id="IPR023632">
    <property type="entry name" value="ATP_synth_F1_gsu_CS"/>
</dbReference>
<dbReference type="NCBIfam" id="TIGR01146">
    <property type="entry name" value="ATPsyn_F1gamma"/>
    <property type="match status" value="1"/>
</dbReference>
<dbReference type="NCBIfam" id="NF004144">
    <property type="entry name" value="PRK05621.1-1"/>
    <property type="match status" value="1"/>
</dbReference>
<dbReference type="PANTHER" id="PTHR11693">
    <property type="entry name" value="ATP SYNTHASE GAMMA CHAIN"/>
    <property type="match status" value="1"/>
</dbReference>
<dbReference type="PANTHER" id="PTHR11693:SF22">
    <property type="entry name" value="ATP SYNTHASE SUBUNIT GAMMA, MITOCHONDRIAL"/>
    <property type="match status" value="1"/>
</dbReference>
<dbReference type="Pfam" id="PF00231">
    <property type="entry name" value="ATP-synt"/>
    <property type="match status" value="1"/>
</dbReference>
<dbReference type="PRINTS" id="PR00126">
    <property type="entry name" value="ATPASEGAMMA"/>
</dbReference>
<dbReference type="SUPFAM" id="SSF52943">
    <property type="entry name" value="ATP synthase (F1-ATPase), gamma subunit"/>
    <property type="match status" value="1"/>
</dbReference>
<dbReference type="PROSITE" id="PS00153">
    <property type="entry name" value="ATPASE_GAMMA"/>
    <property type="match status" value="1"/>
</dbReference>
<organism>
    <name type="scientific">Escherichia coli O45:K1 (strain S88 / ExPEC)</name>
    <dbReference type="NCBI Taxonomy" id="585035"/>
    <lineage>
        <taxon>Bacteria</taxon>
        <taxon>Pseudomonadati</taxon>
        <taxon>Pseudomonadota</taxon>
        <taxon>Gammaproteobacteria</taxon>
        <taxon>Enterobacterales</taxon>
        <taxon>Enterobacteriaceae</taxon>
        <taxon>Escherichia</taxon>
    </lineage>
</organism>
<evidence type="ECO:0000255" key="1">
    <source>
        <dbReference type="HAMAP-Rule" id="MF_00815"/>
    </source>
</evidence>
<proteinExistence type="inferred from homology"/>
<feature type="chain" id="PRO_1000134142" description="ATP synthase gamma chain">
    <location>
        <begin position="1"/>
        <end position="287"/>
    </location>
</feature>